<organism>
    <name type="scientific">Amphidinium carterae</name>
    <name type="common">Dinoflagellate</name>
    <dbReference type="NCBI Taxonomy" id="2961"/>
    <lineage>
        <taxon>Eukaryota</taxon>
        <taxon>Sar</taxon>
        <taxon>Alveolata</taxon>
        <taxon>Dinophyceae</taxon>
        <taxon>Amphidiniales</taxon>
        <taxon>Amphidiniaceae</taxon>
        <taxon>Amphidinium</taxon>
    </lineage>
</organism>
<reference key="1">
    <citation type="journal article" date="1996" name="Biochim. Biophys. Acta">
        <title>Two distinct forms of the peridinin-chlorophyll a-protein from Amphidinium carterae.</title>
        <authorList>
            <person name="Sharples F.P."/>
            <person name="Wrench P.M."/>
            <person name="Ou K."/>
            <person name="Hiller R.G."/>
        </authorList>
    </citation>
    <scope>PARTIAL NUCLEOTIDE SEQUENCE</scope>
    <scope>PARTIAL PROTEIN SEQUENCE</scope>
    <source>
        <strain>CS21</strain>
    </source>
</reference>
<name>PCP3_AMPCA</name>
<sequence>DGIADASKKFSDATYPIAEKFDWGGSSAVAKYIADASASNPRQAALAVEKLLETGLTMDPKLVRAAVAAHSKALDTAVSNPKLVASKEDFAAVNEALARMIASADKQKFAALRTAFPESRELQSSLFAGNNGYEAEKAYDSFKALTSAVRDASINGANAPVIAEAARSERYVPDGPVGRAAKKFSEATYPIMEKLNWVKSPEISKYLATASSKDPKMMAPGIDKTLEVALTMNQNLINNAVYAHVRAIKGALNTPGFVAERDDFARVNLALAKMIGSADPAKFKALLTAFPGNADLQMALFAANPEQAKAAYETFVALTSAVV</sequence>
<comment type="function">
    <text>Water-soluble antenna for capture of solar energy in the blue-green range. Peridinin is an asymmetric carotenoid.</text>
</comment>
<comment type="biophysicochemical properties">
    <absorption>
        <max>~480 nm</max>
    </absorption>
</comment>
<comment type="subunit">
    <text>Homotrimer.</text>
</comment>
<comment type="subcellular location">
    <subcellularLocation>
        <location>Plastid</location>
        <location>Chloroplast</location>
    </subcellularLocation>
</comment>
<comment type="domain">
    <text>The mature protein is composed of 2 almost identical repeat units.</text>
</comment>
<dbReference type="SMR" id="P80483"/>
<dbReference type="GO" id="GO:0009507">
    <property type="term" value="C:chloroplast"/>
    <property type="evidence" value="ECO:0007669"/>
    <property type="project" value="UniProtKB-SubCell"/>
</dbReference>
<dbReference type="GO" id="GO:0030076">
    <property type="term" value="C:light-harvesting complex"/>
    <property type="evidence" value="ECO:0007669"/>
    <property type="project" value="UniProtKB-KW"/>
</dbReference>
<dbReference type="GO" id="GO:0016168">
    <property type="term" value="F:chlorophyll binding"/>
    <property type="evidence" value="ECO:0007669"/>
    <property type="project" value="UniProtKB-KW"/>
</dbReference>
<dbReference type="Gene3D" id="1.40.10.10">
    <property type="entry name" value="Peridinin-chlorophyll A binding"/>
    <property type="match status" value="2"/>
</dbReference>
<dbReference type="InterPro" id="IPR003376">
    <property type="entry name" value="Peridinin-chlorophyll-bd_prot"/>
</dbReference>
<dbReference type="InterPro" id="IPR036550">
    <property type="entry name" value="Peridinin-chlorophyll-bd_sf"/>
</dbReference>
<dbReference type="Pfam" id="PF02429">
    <property type="entry name" value="PCP"/>
    <property type="match status" value="2"/>
</dbReference>
<dbReference type="SUPFAM" id="SSF48608">
    <property type="entry name" value="Peridinin-chlorophyll protein"/>
    <property type="match status" value="2"/>
</dbReference>
<proteinExistence type="evidence at protein level"/>
<protein>
    <recommendedName>
        <fullName>Peridinin-chlorophyll a-binding protein 3</fullName>
        <shortName>PCP</shortName>
    </recommendedName>
</protein>
<keyword id="KW-0148">Chlorophyll</keyword>
<keyword id="KW-0150">Chloroplast</keyword>
<keyword id="KW-0157">Chromophore</keyword>
<keyword id="KW-0903">Direct protein sequencing</keyword>
<keyword id="KW-0437">Light-harvesting polypeptide</keyword>
<keyword id="KW-0934">Plastid</keyword>
<keyword id="KW-0677">Repeat</keyword>
<feature type="chain" id="PRO_0000058262" description="Peridinin-chlorophyll a-binding protein 3">
    <location>
        <begin position="1"/>
        <end position="323"/>
    </location>
</feature>
<feature type="repeat" description="1">
    <location>
        <begin position="1"/>
        <end position="173"/>
    </location>
</feature>
<feature type="repeat" description="2">
    <location>
        <begin position="174"/>
        <end position="323"/>
    </location>
</feature>
<feature type="site" description="Chlorophyll a binding">
    <location>
        <position position="70"/>
    </location>
</feature>
<feature type="site" description="Chlorophyll a binding">
    <location>
        <position position="244"/>
    </location>
</feature>
<accession>P80483</accession>